<organism>
    <name type="scientific">Bordetella pertussis (strain Tohama I / ATCC BAA-589 / NCTC 13251)</name>
    <dbReference type="NCBI Taxonomy" id="257313"/>
    <lineage>
        <taxon>Bacteria</taxon>
        <taxon>Pseudomonadati</taxon>
        <taxon>Pseudomonadota</taxon>
        <taxon>Betaproteobacteria</taxon>
        <taxon>Burkholderiales</taxon>
        <taxon>Alcaligenaceae</taxon>
        <taxon>Bordetella</taxon>
    </lineage>
</organism>
<accession>Q7VT61</accession>
<dbReference type="EC" id="2.1.1.33" evidence="2"/>
<dbReference type="EMBL" id="BX640422">
    <property type="protein sequence ID" value="CAE43949.1"/>
    <property type="molecule type" value="Genomic_DNA"/>
</dbReference>
<dbReference type="RefSeq" id="NP_882197.1">
    <property type="nucleotide sequence ID" value="NC_002929.2"/>
</dbReference>
<dbReference type="RefSeq" id="WP_010931594.1">
    <property type="nucleotide sequence ID" value="NZ_CP039022.1"/>
</dbReference>
<dbReference type="SMR" id="Q7VT61"/>
<dbReference type="STRING" id="257313.BP3692"/>
<dbReference type="PaxDb" id="257313-BP3692"/>
<dbReference type="GeneID" id="69600080"/>
<dbReference type="KEGG" id="bpe:BP3692"/>
<dbReference type="PATRIC" id="fig|257313.5.peg.3994"/>
<dbReference type="eggNOG" id="COG0220">
    <property type="taxonomic scope" value="Bacteria"/>
</dbReference>
<dbReference type="HOGENOM" id="CLU_050910_0_1_4"/>
<dbReference type="UniPathway" id="UPA00989"/>
<dbReference type="Proteomes" id="UP000002676">
    <property type="component" value="Chromosome"/>
</dbReference>
<dbReference type="GO" id="GO:0043527">
    <property type="term" value="C:tRNA methyltransferase complex"/>
    <property type="evidence" value="ECO:0007669"/>
    <property type="project" value="TreeGrafter"/>
</dbReference>
<dbReference type="GO" id="GO:0008176">
    <property type="term" value="F:tRNA (guanine(46)-N7)-methyltransferase activity"/>
    <property type="evidence" value="ECO:0007669"/>
    <property type="project" value="UniProtKB-UniRule"/>
</dbReference>
<dbReference type="FunFam" id="3.40.50.150:FF:000035">
    <property type="entry name" value="tRNA (guanine-N(7)-)-methyltransferase"/>
    <property type="match status" value="1"/>
</dbReference>
<dbReference type="Gene3D" id="3.40.50.150">
    <property type="entry name" value="Vaccinia Virus protein VP39"/>
    <property type="match status" value="1"/>
</dbReference>
<dbReference type="HAMAP" id="MF_01057">
    <property type="entry name" value="tRNA_methyltr_TrmB"/>
    <property type="match status" value="1"/>
</dbReference>
<dbReference type="InterPro" id="IPR029063">
    <property type="entry name" value="SAM-dependent_MTases_sf"/>
</dbReference>
<dbReference type="InterPro" id="IPR003358">
    <property type="entry name" value="tRNA_(Gua-N-7)_MeTrfase_Trmb"/>
</dbReference>
<dbReference type="InterPro" id="IPR055361">
    <property type="entry name" value="tRNA_methyltr_TrmB_bact"/>
</dbReference>
<dbReference type="NCBIfam" id="TIGR00091">
    <property type="entry name" value="tRNA (guanosine(46)-N7)-methyltransferase TrmB"/>
    <property type="match status" value="1"/>
</dbReference>
<dbReference type="PANTHER" id="PTHR23417">
    <property type="entry name" value="3-DEOXY-D-MANNO-OCTULOSONIC-ACID TRANSFERASE/TRNA GUANINE-N 7 - -METHYLTRANSFERASE"/>
    <property type="match status" value="1"/>
</dbReference>
<dbReference type="PANTHER" id="PTHR23417:SF14">
    <property type="entry name" value="PENTACOTRIPEPTIDE-REPEAT REGION OF PRORP DOMAIN-CONTAINING PROTEIN"/>
    <property type="match status" value="1"/>
</dbReference>
<dbReference type="Pfam" id="PF02390">
    <property type="entry name" value="Methyltransf_4"/>
    <property type="match status" value="1"/>
</dbReference>
<dbReference type="SUPFAM" id="SSF53335">
    <property type="entry name" value="S-adenosyl-L-methionine-dependent methyltransferases"/>
    <property type="match status" value="1"/>
</dbReference>
<dbReference type="PROSITE" id="PS51625">
    <property type="entry name" value="SAM_MT_TRMB"/>
    <property type="match status" value="1"/>
</dbReference>
<comment type="function">
    <text evidence="2">Catalyzes the formation of N(7)-methylguanine at position 46 (m7G46) in tRNA.</text>
</comment>
<comment type="catalytic activity">
    <reaction evidence="2">
        <text>guanosine(46) in tRNA + S-adenosyl-L-methionine = N(7)-methylguanosine(46) in tRNA + S-adenosyl-L-homocysteine</text>
        <dbReference type="Rhea" id="RHEA:42708"/>
        <dbReference type="Rhea" id="RHEA-COMP:10188"/>
        <dbReference type="Rhea" id="RHEA-COMP:10189"/>
        <dbReference type="ChEBI" id="CHEBI:57856"/>
        <dbReference type="ChEBI" id="CHEBI:59789"/>
        <dbReference type="ChEBI" id="CHEBI:74269"/>
        <dbReference type="ChEBI" id="CHEBI:74480"/>
        <dbReference type="EC" id="2.1.1.33"/>
    </reaction>
</comment>
<comment type="pathway">
    <text evidence="2">tRNA modification; N(7)-methylguanine-tRNA biosynthesis.</text>
</comment>
<comment type="similarity">
    <text evidence="2">Belongs to the class I-like SAM-binding methyltransferase superfamily. TrmB family.</text>
</comment>
<reference key="1">
    <citation type="journal article" date="2003" name="Nat. Genet.">
        <title>Comparative analysis of the genome sequences of Bordetella pertussis, Bordetella parapertussis and Bordetella bronchiseptica.</title>
        <authorList>
            <person name="Parkhill J."/>
            <person name="Sebaihia M."/>
            <person name="Preston A."/>
            <person name="Murphy L.D."/>
            <person name="Thomson N.R."/>
            <person name="Harris D.E."/>
            <person name="Holden M.T.G."/>
            <person name="Churcher C.M."/>
            <person name="Bentley S.D."/>
            <person name="Mungall K.L."/>
            <person name="Cerdeno-Tarraga A.-M."/>
            <person name="Temple L."/>
            <person name="James K.D."/>
            <person name="Harris B."/>
            <person name="Quail M.A."/>
            <person name="Achtman M."/>
            <person name="Atkin R."/>
            <person name="Baker S."/>
            <person name="Basham D."/>
            <person name="Bason N."/>
            <person name="Cherevach I."/>
            <person name="Chillingworth T."/>
            <person name="Collins M."/>
            <person name="Cronin A."/>
            <person name="Davis P."/>
            <person name="Doggett J."/>
            <person name="Feltwell T."/>
            <person name="Goble A."/>
            <person name="Hamlin N."/>
            <person name="Hauser H."/>
            <person name="Holroyd S."/>
            <person name="Jagels K."/>
            <person name="Leather S."/>
            <person name="Moule S."/>
            <person name="Norberczak H."/>
            <person name="O'Neil S."/>
            <person name="Ormond D."/>
            <person name="Price C."/>
            <person name="Rabbinowitsch E."/>
            <person name="Rutter S."/>
            <person name="Sanders M."/>
            <person name="Saunders D."/>
            <person name="Seeger K."/>
            <person name="Sharp S."/>
            <person name="Simmonds M."/>
            <person name="Skelton J."/>
            <person name="Squares R."/>
            <person name="Squares S."/>
            <person name="Stevens K."/>
            <person name="Unwin L."/>
            <person name="Whitehead S."/>
            <person name="Barrell B.G."/>
            <person name="Maskell D.J."/>
        </authorList>
    </citation>
    <scope>NUCLEOTIDE SEQUENCE [LARGE SCALE GENOMIC DNA]</scope>
    <source>
        <strain>Tohama I / ATCC BAA-589 / NCTC 13251</strain>
    </source>
</reference>
<name>TRMB_BORPE</name>
<evidence type="ECO:0000250" key="1"/>
<evidence type="ECO:0000255" key="2">
    <source>
        <dbReference type="HAMAP-Rule" id="MF_01057"/>
    </source>
</evidence>
<evidence type="ECO:0000256" key="3">
    <source>
        <dbReference type="SAM" id="MobiDB-lite"/>
    </source>
</evidence>
<feature type="chain" id="PRO_0000171303" description="tRNA (guanine-N(7)-)-methyltransferase">
    <location>
        <begin position="1"/>
        <end position="254"/>
    </location>
</feature>
<feature type="region of interest" description="Disordered" evidence="3">
    <location>
        <begin position="1"/>
        <end position="34"/>
    </location>
</feature>
<feature type="active site" evidence="1">
    <location>
        <position position="162"/>
    </location>
</feature>
<feature type="binding site" evidence="2">
    <location>
        <position position="87"/>
    </location>
    <ligand>
        <name>S-adenosyl-L-methionine</name>
        <dbReference type="ChEBI" id="CHEBI:59789"/>
    </ligand>
</feature>
<feature type="binding site" evidence="2">
    <location>
        <position position="112"/>
    </location>
    <ligand>
        <name>S-adenosyl-L-methionine</name>
        <dbReference type="ChEBI" id="CHEBI:59789"/>
    </ligand>
</feature>
<feature type="binding site" evidence="2">
    <location>
        <position position="139"/>
    </location>
    <ligand>
        <name>S-adenosyl-L-methionine</name>
        <dbReference type="ChEBI" id="CHEBI:59789"/>
    </ligand>
</feature>
<feature type="binding site" evidence="2">
    <location>
        <position position="162"/>
    </location>
    <ligand>
        <name>S-adenosyl-L-methionine</name>
        <dbReference type="ChEBI" id="CHEBI:59789"/>
    </ligand>
</feature>
<feature type="binding site" evidence="2">
    <location>
        <position position="166"/>
    </location>
    <ligand>
        <name>substrate</name>
    </ligand>
</feature>
<feature type="binding site" evidence="2">
    <location>
        <position position="198"/>
    </location>
    <ligand>
        <name>substrate</name>
    </ligand>
</feature>
<feature type="binding site" evidence="2">
    <location>
        <begin position="233"/>
        <end position="236"/>
    </location>
    <ligand>
        <name>substrate</name>
    </ligand>
</feature>
<protein>
    <recommendedName>
        <fullName evidence="2">tRNA (guanine-N(7)-)-methyltransferase</fullName>
        <ecNumber evidence="2">2.1.1.33</ecNumber>
    </recommendedName>
    <alternativeName>
        <fullName evidence="2">tRNA (guanine(46)-N(7))-methyltransferase</fullName>
    </alternativeName>
    <alternativeName>
        <fullName evidence="2">tRNA(m7G46)-methyltransferase</fullName>
    </alternativeName>
</protein>
<sequence>MNTNTPAHPPEGAPLSEATQAALASAEHAPDSPGATHIRSFVHRRGHITQRQRDALEQLMGKWSVPYAPRPLDMAAAFGRQAPTILEIGFGMGETTEKIALARPGDNFLGVEVFNAGVGSLLHRIEESAISNLRIVQHDAVEVVRDMIAPDSLAGVHVYFPDPWPKKRHHKRRLLQPPFVALLASRLAPGGYLHCATDWEDYAVQMLEVLGGEPLLRNTADGYAPRPDFRPQTKFETRGLRLGHGVWDLMFKRA</sequence>
<gene>
    <name evidence="2" type="primary">trmB</name>
    <name type="ordered locus">BP3692</name>
</gene>
<proteinExistence type="inferred from homology"/>
<keyword id="KW-0489">Methyltransferase</keyword>
<keyword id="KW-1185">Reference proteome</keyword>
<keyword id="KW-0949">S-adenosyl-L-methionine</keyword>
<keyword id="KW-0808">Transferase</keyword>
<keyword id="KW-0819">tRNA processing</keyword>